<proteinExistence type="inferred from homology"/>
<feature type="chain" id="PRO_0000133126" description="Replication protein E1">
    <location>
        <begin position="1"/>
        <end position="662"/>
    </location>
</feature>
<feature type="domain" description="SF3 helicase" evidence="1">
    <location>
        <begin position="464"/>
        <end position="614"/>
    </location>
</feature>
<feature type="region of interest" description="Disordered" evidence="2">
    <location>
        <begin position="28"/>
        <end position="60"/>
    </location>
</feature>
<feature type="region of interest" description="Disordered" evidence="2">
    <location>
        <begin position="160"/>
        <end position="197"/>
    </location>
</feature>
<feature type="region of interest" description="DNA-binding region" evidence="1">
    <location>
        <begin position="199"/>
        <end position="365"/>
    </location>
</feature>
<feature type="region of interest" description="Disordered" evidence="2">
    <location>
        <begin position="637"/>
        <end position="662"/>
    </location>
</feature>
<feature type="short sequence motif" description="Nuclear localization signal" evidence="1">
    <location>
        <begin position="88"/>
        <end position="90"/>
    </location>
</feature>
<feature type="short sequence motif" description="Nuclear export signal" evidence="1">
    <location>
        <begin position="110"/>
        <end position="119"/>
    </location>
</feature>
<feature type="compositionally biased region" description="Basic and acidic residues" evidence="2">
    <location>
        <begin position="28"/>
        <end position="38"/>
    </location>
</feature>
<feature type="compositionally biased region" description="Acidic residues" evidence="2">
    <location>
        <begin position="39"/>
        <end position="55"/>
    </location>
</feature>
<feature type="binding site" evidence="1">
    <location>
        <begin position="490"/>
        <end position="497"/>
    </location>
    <ligand>
        <name>ATP</name>
        <dbReference type="ChEBI" id="CHEBI:30616"/>
    </ligand>
</feature>
<feature type="modified residue" description="Phosphoserine; by host" evidence="1">
    <location>
        <position position="94"/>
    </location>
</feature>
<feature type="modified residue" description="Phosphoserine; by host" evidence="1">
    <location>
        <position position="98"/>
    </location>
</feature>
<feature type="modified residue" description="Phosphoserine; by host" evidence="1">
    <location>
        <position position="111"/>
    </location>
</feature>
<feature type="cross-link" description="Glycyl lysine isopeptide (Lys-Gly) (interchain with G-Cter in SUMO)" evidence="1">
    <location>
        <position position="571"/>
    </location>
</feature>
<name>VE1_HPV28</name>
<organismHost>
    <name type="scientific">Homo sapiens</name>
    <name type="common">Human</name>
    <dbReference type="NCBI Taxonomy" id="9606"/>
</organismHost>
<reference key="1">
    <citation type="submission" date="1995-10" db="EMBL/GenBank/DDBJ databases">
        <authorList>
            <person name="Delius H."/>
        </authorList>
    </citation>
    <scope>NUCLEOTIDE SEQUENCE [GENOMIC DNA]</scope>
</reference>
<dbReference type="EC" id="5.6.2.4" evidence="1"/>
<dbReference type="EMBL" id="U31783">
    <property type="protein sequence ID" value="AAA79424.1"/>
    <property type="molecule type" value="Genomic_DNA"/>
</dbReference>
<dbReference type="SMR" id="P50763"/>
<dbReference type="Proteomes" id="UP000009158">
    <property type="component" value="Genome"/>
</dbReference>
<dbReference type="GO" id="GO:0042025">
    <property type="term" value="C:host cell nucleus"/>
    <property type="evidence" value="ECO:0007669"/>
    <property type="project" value="UniProtKB-SubCell"/>
</dbReference>
<dbReference type="GO" id="GO:0005524">
    <property type="term" value="F:ATP binding"/>
    <property type="evidence" value="ECO:0007669"/>
    <property type="project" value="UniProtKB-UniRule"/>
</dbReference>
<dbReference type="GO" id="GO:0016887">
    <property type="term" value="F:ATP hydrolysis activity"/>
    <property type="evidence" value="ECO:0007669"/>
    <property type="project" value="RHEA"/>
</dbReference>
<dbReference type="GO" id="GO:0003677">
    <property type="term" value="F:DNA binding"/>
    <property type="evidence" value="ECO:0007669"/>
    <property type="project" value="UniProtKB-UniRule"/>
</dbReference>
<dbReference type="GO" id="GO:0003678">
    <property type="term" value="F:DNA helicase activity"/>
    <property type="evidence" value="ECO:0007669"/>
    <property type="project" value="UniProtKB-UniRule"/>
</dbReference>
<dbReference type="GO" id="GO:0006260">
    <property type="term" value="P:DNA replication"/>
    <property type="evidence" value="ECO:0007669"/>
    <property type="project" value="UniProtKB-UniRule"/>
</dbReference>
<dbReference type="Gene3D" id="3.40.1310.10">
    <property type="match status" value="1"/>
</dbReference>
<dbReference type="Gene3D" id="3.40.50.300">
    <property type="entry name" value="P-loop containing nucleotide triphosphate hydrolases"/>
    <property type="match status" value="1"/>
</dbReference>
<dbReference type="Gene3D" id="1.10.10.510">
    <property type="entry name" value="Zinc finger, large T-antigen D1 domain"/>
    <property type="match status" value="1"/>
</dbReference>
<dbReference type="HAMAP" id="MF_04000">
    <property type="entry name" value="PPV_E1"/>
    <property type="match status" value="1"/>
</dbReference>
<dbReference type="InterPro" id="IPR014015">
    <property type="entry name" value="Helicase_SF3_DNA-vir"/>
</dbReference>
<dbReference type="InterPro" id="IPR027417">
    <property type="entry name" value="P-loop_NTPase"/>
</dbReference>
<dbReference type="InterPro" id="IPR001177">
    <property type="entry name" value="PPV_DNA_helicase_E1_C"/>
</dbReference>
<dbReference type="InterPro" id="IPR014000">
    <property type="entry name" value="PPV_DNA_helicase_E1_N"/>
</dbReference>
<dbReference type="InterPro" id="IPR046832">
    <property type="entry name" value="PPV_E1_DBD"/>
</dbReference>
<dbReference type="InterPro" id="IPR046935">
    <property type="entry name" value="PPV_E1_DBD_sf"/>
</dbReference>
<dbReference type="InterPro" id="IPR016393">
    <property type="entry name" value="Rep_E1_papillomaV"/>
</dbReference>
<dbReference type="InterPro" id="IPR037102">
    <property type="entry name" value="Znf_lg_T-Ag_D1_dom_sf"/>
</dbReference>
<dbReference type="Pfam" id="PF00519">
    <property type="entry name" value="PPV_E1_C"/>
    <property type="match status" value="1"/>
</dbReference>
<dbReference type="Pfam" id="PF20450">
    <property type="entry name" value="PPV_E1_DBD"/>
    <property type="match status" value="1"/>
</dbReference>
<dbReference type="Pfam" id="PF00524">
    <property type="entry name" value="PPV_E1_N"/>
    <property type="match status" value="1"/>
</dbReference>
<dbReference type="PIRSF" id="PIRSF003383">
    <property type="entry name" value="Rep_E1_papillomaV"/>
    <property type="match status" value="1"/>
</dbReference>
<dbReference type="SUPFAM" id="SSF55464">
    <property type="entry name" value="Origin of replication-binding domain, RBD-like"/>
    <property type="match status" value="1"/>
</dbReference>
<dbReference type="SUPFAM" id="SSF52540">
    <property type="entry name" value="P-loop containing nucleoside triphosphate hydrolases"/>
    <property type="match status" value="1"/>
</dbReference>
<dbReference type="PROSITE" id="PS51206">
    <property type="entry name" value="SF3_HELICASE_1"/>
    <property type="match status" value="1"/>
</dbReference>
<organism>
    <name type="scientific">Human papillomavirus 28</name>
    <dbReference type="NCBI Taxonomy" id="37111"/>
    <lineage>
        <taxon>Viruses</taxon>
        <taxon>Monodnaviria</taxon>
        <taxon>Shotokuvirae</taxon>
        <taxon>Cossaviricota</taxon>
        <taxon>Papovaviricetes</taxon>
        <taxon>Zurhausenvirales</taxon>
        <taxon>Papillomaviridae</taxon>
        <taxon>Firstpapillomavirinae</taxon>
        <taxon>Alphapapillomavirus</taxon>
        <taxon>Alphapapillomavirus 2</taxon>
    </lineage>
</organism>
<sequence>MDDTSGTEGDECSELERAGGWFMVEAIVDRRTGDKPSSDEDEDEDADEGEDFVDFIDDRPVGDGQEVAQELLLQQAAADDDVAVQAVKRKFAPSPYFSPVCMQPSIENELSPRLDAIKLGRQSGTAKRRLFQLPDSGYGQTQVDTESGPLQVQDICETGTQDGRQDADEGSGRNVGGNGGQEEERAGGDGEESQTQGVQTDKAACGVLAILRASNQKATLLGKFKEQFGLGFNELIRHFKSSKTVCLDWVVCVFGVYCTLAEGIKTLIQPQCDYAHIQVLSCQWGMTVLMLVRYKRAKNRETVAKGLSTLLNVPESHMLIEPPKLRSGPAALYWYKTAMSNCSDVYGETPEWIVRQTMVGHALEEAQFSLSEMVQYAYDHDITDESMLAFEYALLADTDANAAAFLSSNCQAKYVKDACTMCRHYKRGEQARMNMSEWIWFRGDKVQGDGDWKPIVQFLRYHDVEFIPFLCAFKTFLQGIPKKSCLVFYGPADTGKSYFCMSLLRFLGGVVISYANSNSHFWLQPLADAKIGLLDDATSQCWCYIDTYLRNALDGNQVCIDRKHRALLQLKCPPLLITTNINPLEDDRWKYLRSRVQLFTFKNKFPLTTQGEPLYTLNDQNWKCFFRRLWARLSLTDPDDEEENGNPSEPFRCVPGQNARTL</sequence>
<accession>P50763</accession>
<keyword id="KW-0067">ATP-binding</keyword>
<keyword id="KW-0235">DNA replication</keyword>
<keyword id="KW-0238">DNA-binding</keyword>
<keyword id="KW-0244">Early protein</keyword>
<keyword id="KW-0347">Helicase</keyword>
<keyword id="KW-1048">Host nucleus</keyword>
<keyword id="KW-0378">Hydrolase</keyword>
<keyword id="KW-0413">Isomerase</keyword>
<keyword id="KW-1017">Isopeptide bond</keyword>
<keyword id="KW-0547">Nucleotide-binding</keyword>
<keyword id="KW-0597">Phosphoprotein</keyword>
<keyword id="KW-0832">Ubl conjugation</keyword>
<comment type="function">
    <text evidence="1">ATP-dependent DNA 3'-5' helicase required for initiation of viral DNA replication. It forms a complex with the viral E2 protein. The E1-E2 complex binds to the replication origin which contains binding sites for both proteins. During the initial step, a dimer of E1 interacts with a dimer of protein E2 leading to a complex that binds the viral origin of replication with high specificity. Then, a second dimer of E1 displaces the E2 dimer in an ATP-dependent manner to form the E1 tetramer. Following this, two E1 monomers are added to each half of the site, which results in the formation of two E1 trimers on the viral ori. Subsequently, two hexamers will be created. The double hexamer acts as a bi-directional helicase machinery and unwinds the viral DNA and then recruits the host DNA polymerase to start replication.</text>
</comment>
<comment type="catalytic activity">
    <reaction evidence="1">
        <text>Couples ATP hydrolysis with the unwinding of duplex DNA by translocating in the 3'-5' direction.</text>
        <dbReference type="EC" id="5.6.2.4"/>
    </reaction>
</comment>
<comment type="catalytic activity">
    <reaction evidence="1">
        <text>ATP + H2O = ADP + phosphate + H(+)</text>
        <dbReference type="Rhea" id="RHEA:13065"/>
        <dbReference type="ChEBI" id="CHEBI:15377"/>
        <dbReference type="ChEBI" id="CHEBI:15378"/>
        <dbReference type="ChEBI" id="CHEBI:30616"/>
        <dbReference type="ChEBI" id="CHEBI:43474"/>
        <dbReference type="ChEBI" id="CHEBI:456216"/>
        <dbReference type="EC" id="5.6.2.4"/>
    </reaction>
</comment>
<comment type="subunit">
    <text evidence="1">Can form hexamers. Interacts with E2 protein; this interaction increases E1 DNA binding specificity. Interacts with host DNA polymerase subunit POLA2. Interacts with host single stranded DNA-binding protein RPA1. Interacts with host TOP1; this interaction stimulates the enzymatic activity of TOP1.</text>
</comment>
<comment type="subcellular location">
    <subcellularLocation>
        <location evidence="1">Host nucleus</location>
    </subcellularLocation>
</comment>
<comment type="PTM">
    <text evidence="1">Phosphorylated.</text>
</comment>
<comment type="PTM">
    <text evidence="1">Sumoylated.</text>
</comment>
<comment type="similarity">
    <text evidence="1">Belongs to the papillomaviridae E1 protein family.</text>
</comment>
<gene>
    <name evidence="1" type="primary">E1</name>
</gene>
<evidence type="ECO:0000255" key="1">
    <source>
        <dbReference type="HAMAP-Rule" id="MF_04000"/>
    </source>
</evidence>
<evidence type="ECO:0000256" key="2">
    <source>
        <dbReference type="SAM" id="MobiDB-lite"/>
    </source>
</evidence>
<protein>
    <recommendedName>
        <fullName evidence="1">Replication protein E1</fullName>
        <ecNumber evidence="1">5.6.2.4</ecNumber>
    </recommendedName>
    <alternativeName>
        <fullName evidence="1">ATP-dependent helicase E1</fullName>
    </alternativeName>
    <alternativeName>
        <fullName evidence="1">DNA 3'-5' helicase E1</fullName>
    </alternativeName>
</protein>